<gene>
    <name evidence="1" type="primary">rpmD</name>
    <name type="ordered locus">SH0820</name>
</gene>
<protein>
    <recommendedName>
        <fullName evidence="1">Large ribosomal subunit protein uL30</fullName>
    </recommendedName>
    <alternativeName>
        <fullName evidence="2">50S ribosomal protein L30</fullName>
    </alternativeName>
</protein>
<organism>
    <name type="scientific">Staphylococcus haemolyticus (strain JCSC1435)</name>
    <dbReference type="NCBI Taxonomy" id="279808"/>
    <lineage>
        <taxon>Bacteria</taxon>
        <taxon>Bacillati</taxon>
        <taxon>Bacillota</taxon>
        <taxon>Bacilli</taxon>
        <taxon>Bacillales</taxon>
        <taxon>Staphylococcaceae</taxon>
        <taxon>Staphylococcus</taxon>
    </lineage>
</organism>
<proteinExistence type="inferred from homology"/>
<sequence>MAKLQITLTRSVIGRPETQRKTVEALGLKKTNSSVVVEDNPAIRGQINKVRHLLTVEEK</sequence>
<comment type="subunit">
    <text evidence="1">Part of the 50S ribosomal subunit.</text>
</comment>
<comment type="similarity">
    <text evidence="1">Belongs to the universal ribosomal protein uL30 family.</text>
</comment>
<dbReference type="EMBL" id="AP006716">
    <property type="protein sequence ID" value="BAE04129.1"/>
    <property type="molecule type" value="Genomic_DNA"/>
</dbReference>
<dbReference type="RefSeq" id="WP_011275138.1">
    <property type="nucleotide sequence ID" value="NC_007168.1"/>
</dbReference>
<dbReference type="SMR" id="Q4L896"/>
<dbReference type="GeneID" id="93780209"/>
<dbReference type="KEGG" id="sha:SH0820"/>
<dbReference type="eggNOG" id="COG1841">
    <property type="taxonomic scope" value="Bacteria"/>
</dbReference>
<dbReference type="HOGENOM" id="CLU_131047_2_1_9"/>
<dbReference type="OrthoDB" id="9812790at2"/>
<dbReference type="Proteomes" id="UP000000543">
    <property type="component" value="Chromosome"/>
</dbReference>
<dbReference type="GO" id="GO:0022625">
    <property type="term" value="C:cytosolic large ribosomal subunit"/>
    <property type="evidence" value="ECO:0007669"/>
    <property type="project" value="TreeGrafter"/>
</dbReference>
<dbReference type="GO" id="GO:0003735">
    <property type="term" value="F:structural constituent of ribosome"/>
    <property type="evidence" value="ECO:0007669"/>
    <property type="project" value="InterPro"/>
</dbReference>
<dbReference type="GO" id="GO:0006412">
    <property type="term" value="P:translation"/>
    <property type="evidence" value="ECO:0007669"/>
    <property type="project" value="UniProtKB-UniRule"/>
</dbReference>
<dbReference type="CDD" id="cd01658">
    <property type="entry name" value="Ribosomal_L30"/>
    <property type="match status" value="1"/>
</dbReference>
<dbReference type="FunFam" id="3.30.1390.20:FF:000001">
    <property type="entry name" value="50S ribosomal protein L30"/>
    <property type="match status" value="1"/>
</dbReference>
<dbReference type="Gene3D" id="3.30.1390.20">
    <property type="entry name" value="Ribosomal protein L30, ferredoxin-like fold domain"/>
    <property type="match status" value="1"/>
</dbReference>
<dbReference type="HAMAP" id="MF_01371_B">
    <property type="entry name" value="Ribosomal_uL30_B"/>
    <property type="match status" value="1"/>
</dbReference>
<dbReference type="InterPro" id="IPR036919">
    <property type="entry name" value="Ribo_uL30_ferredoxin-like_sf"/>
</dbReference>
<dbReference type="InterPro" id="IPR005996">
    <property type="entry name" value="Ribosomal_uL30_bac-type"/>
</dbReference>
<dbReference type="InterPro" id="IPR016082">
    <property type="entry name" value="Ribosomal_uL30_ferredoxin-like"/>
</dbReference>
<dbReference type="NCBIfam" id="TIGR01308">
    <property type="entry name" value="rpmD_bact"/>
    <property type="match status" value="1"/>
</dbReference>
<dbReference type="PANTHER" id="PTHR15892:SF2">
    <property type="entry name" value="LARGE RIBOSOMAL SUBUNIT PROTEIN UL30M"/>
    <property type="match status" value="1"/>
</dbReference>
<dbReference type="PANTHER" id="PTHR15892">
    <property type="entry name" value="MITOCHONDRIAL RIBOSOMAL PROTEIN L30"/>
    <property type="match status" value="1"/>
</dbReference>
<dbReference type="Pfam" id="PF00327">
    <property type="entry name" value="Ribosomal_L30"/>
    <property type="match status" value="1"/>
</dbReference>
<dbReference type="PIRSF" id="PIRSF002211">
    <property type="entry name" value="Ribosomal_L30_bac-type"/>
    <property type="match status" value="1"/>
</dbReference>
<dbReference type="SUPFAM" id="SSF55129">
    <property type="entry name" value="Ribosomal protein L30p/L7e"/>
    <property type="match status" value="1"/>
</dbReference>
<reference key="1">
    <citation type="journal article" date="2005" name="J. Bacteriol.">
        <title>Whole-genome sequencing of Staphylococcus haemolyticus uncovers the extreme plasticity of its genome and the evolution of human-colonizing staphylococcal species.</title>
        <authorList>
            <person name="Takeuchi F."/>
            <person name="Watanabe S."/>
            <person name="Baba T."/>
            <person name="Yuzawa H."/>
            <person name="Ito T."/>
            <person name="Morimoto Y."/>
            <person name="Kuroda M."/>
            <person name="Cui L."/>
            <person name="Takahashi M."/>
            <person name="Ankai A."/>
            <person name="Baba S."/>
            <person name="Fukui S."/>
            <person name="Lee J.C."/>
            <person name="Hiramatsu K."/>
        </authorList>
    </citation>
    <scope>NUCLEOTIDE SEQUENCE [LARGE SCALE GENOMIC DNA]</scope>
    <source>
        <strain>JCSC1435</strain>
    </source>
</reference>
<keyword id="KW-0687">Ribonucleoprotein</keyword>
<keyword id="KW-0689">Ribosomal protein</keyword>
<accession>Q4L896</accession>
<name>RL30_STAHJ</name>
<feature type="chain" id="PRO_1000056114" description="Large ribosomal subunit protein uL30">
    <location>
        <begin position="1"/>
        <end position="59"/>
    </location>
</feature>
<evidence type="ECO:0000255" key="1">
    <source>
        <dbReference type="HAMAP-Rule" id="MF_01371"/>
    </source>
</evidence>
<evidence type="ECO:0000305" key="2"/>